<evidence type="ECO:0000255" key="1">
    <source>
        <dbReference type="HAMAP-Rule" id="MF_00281"/>
    </source>
</evidence>
<evidence type="ECO:0000256" key="2">
    <source>
        <dbReference type="SAM" id="MobiDB-lite"/>
    </source>
</evidence>
<protein>
    <recommendedName>
        <fullName evidence="1">Phenylalanine--tRNA ligase alpha subunit</fullName>
        <ecNumber evidence="1">6.1.1.20</ecNumber>
    </recommendedName>
    <alternativeName>
        <fullName evidence="1">Phenylalanyl-tRNA synthetase alpha subunit</fullName>
        <shortName evidence="1">PheRS</shortName>
    </alternativeName>
</protein>
<reference key="1">
    <citation type="journal article" date="2003" name="Proc. Natl. Acad. Sci. U.S.A.">
        <title>Complete genome sequence of the marine planctomycete Pirellula sp. strain 1.</title>
        <authorList>
            <person name="Gloeckner F.O."/>
            <person name="Kube M."/>
            <person name="Bauer M."/>
            <person name="Teeling H."/>
            <person name="Lombardot T."/>
            <person name="Ludwig W."/>
            <person name="Gade D."/>
            <person name="Beck A."/>
            <person name="Borzym K."/>
            <person name="Heitmann K."/>
            <person name="Rabus R."/>
            <person name="Schlesner H."/>
            <person name="Amann R."/>
            <person name="Reinhardt R."/>
        </authorList>
    </citation>
    <scope>NUCLEOTIDE SEQUENCE [LARGE SCALE GENOMIC DNA]</scope>
    <source>
        <strain>DSM 10527 / NCIMB 13988 / SH1</strain>
    </source>
</reference>
<sequence length="347" mass="38019">MSLDQFLTRLDQLQSDADSAFTSASDAAALEEARVTFLGAKKGQLKDIQKMLGGIEKADKPAAGAKLNAVKSAINAAFEDAQQNLSGGDDSGADPTFDPTLPGTRPSLGHIHPITQTISHLTEIMGRMGFEVAEGPEVEDPWHNFVALNIPEDHPARDPLDNFYLATAKDPSGKSSVSAGDEGSQLLRSQTSTVQIRVMKQVEPPIRIISLGRVYRPDAPDATHFPMFHQMEGLLVDTNVTMANLKTVLRVFANNYLGEDVEIRFRPSFFPFTEPSVEVDFLWNGTWIEFGGAGMIDPNVFAAVGYDPEKVSGFAFGLGVERLCMRRHGITDIRDLYSGDLRFLKQF</sequence>
<accession>Q7UP75</accession>
<dbReference type="EC" id="6.1.1.20" evidence="1"/>
<dbReference type="EMBL" id="BX294145">
    <property type="protein sequence ID" value="CAD75187.1"/>
    <property type="molecule type" value="Genomic_DNA"/>
</dbReference>
<dbReference type="RefSeq" id="NP_867640.1">
    <property type="nucleotide sequence ID" value="NC_005027.1"/>
</dbReference>
<dbReference type="RefSeq" id="WP_011121253.1">
    <property type="nucleotide sequence ID" value="NC_005027.1"/>
</dbReference>
<dbReference type="SMR" id="Q7UP75"/>
<dbReference type="FunCoup" id="Q7UP75">
    <property type="interactions" value="518"/>
</dbReference>
<dbReference type="STRING" id="243090.RB7114"/>
<dbReference type="EnsemblBacteria" id="CAD75187">
    <property type="protein sequence ID" value="CAD75187"/>
    <property type="gene ID" value="RB7114"/>
</dbReference>
<dbReference type="KEGG" id="rba:RB7114"/>
<dbReference type="PATRIC" id="fig|243090.15.peg.3444"/>
<dbReference type="eggNOG" id="COG0016">
    <property type="taxonomic scope" value="Bacteria"/>
</dbReference>
<dbReference type="HOGENOM" id="CLU_025086_0_1_0"/>
<dbReference type="InParanoid" id="Q7UP75"/>
<dbReference type="OrthoDB" id="9800719at2"/>
<dbReference type="Proteomes" id="UP000001025">
    <property type="component" value="Chromosome"/>
</dbReference>
<dbReference type="GO" id="GO:0005737">
    <property type="term" value="C:cytoplasm"/>
    <property type="evidence" value="ECO:0000318"/>
    <property type="project" value="GO_Central"/>
</dbReference>
<dbReference type="GO" id="GO:0005524">
    <property type="term" value="F:ATP binding"/>
    <property type="evidence" value="ECO:0007669"/>
    <property type="project" value="UniProtKB-UniRule"/>
</dbReference>
<dbReference type="GO" id="GO:0000287">
    <property type="term" value="F:magnesium ion binding"/>
    <property type="evidence" value="ECO:0007669"/>
    <property type="project" value="UniProtKB-UniRule"/>
</dbReference>
<dbReference type="GO" id="GO:0004826">
    <property type="term" value="F:phenylalanine-tRNA ligase activity"/>
    <property type="evidence" value="ECO:0000318"/>
    <property type="project" value="GO_Central"/>
</dbReference>
<dbReference type="GO" id="GO:0000049">
    <property type="term" value="F:tRNA binding"/>
    <property type="evidence" value="ECO:0007669"/>
    <property type="project" value="InterPro"/>
</dbReference>
<dbReference type="GO" id="GO:0006432">
    <property type="term" value="P:phenylalanyl-tRNA aminoacylation"/>
    <property type="evidence" value="ECO:0000318"/>
    <property type="project" value="GO_Central"/>
</dbReference>
<dbReference type="CDD" id="cd00496">
    <property type="entry name" value="PheRS_alpha_core"/>
    <property type="match status" value="1"/>
</dbReference>
<dbReference type="FunFam" id="3.30.930.10:FF:000261">
    <property type="entry name" value="Phenylalanine--tRNA ligase alpha subunit"/>
    <property type="match status" value="1"/>
</dbReference>
<dbReference type="Gene3D" id="3.30.930.10">
    <property type="entry name" value="Bira Bifunctional Protein, Domain 2"/>
    <property type="match status" value="1"/>
</dbReference>
<dbReference type="HAMAP" id="MF_00281">
    <property type="entry name" value="Phe_tRNA_synth_alpha1"/>
    <property type="match status" value="1"/>
</dbReference>
<dbReference type="InterPro" id="IPR006195">
    <property type="entry name" value="aa-tRNA-synth_II"/>
</dbReference>
<dbReference type="InterPro" id="IPR045864">
    <property type="entry name" value="aa-tRNA-synth_II/BPL/LPL"/>
</dbReference>
<dbReference type="InterPro" id="IPR004529">
    <property type="entry name" value="Phe-tRNA-synth_IIc_asu"/>
</dbReference>
<dbReference type="InterPro" id="IPR004188">
    <property type="entry name" value="Phe-tRNA_ligase_II_N"/>
</dbReference>
<dbReference type="InterPro" id="IPR022911">
    <property type="entry name" value="Phe_tRNA_ligase_alpha1_bac"/>
</dbReference>
<dbReference type="InterPro" id="IPR002319">
    <property type="entry name" value="Phenylalanyl-tRNA_Synthase"/>
</dbReference>
<dbReference type="InterPro" id="IPR010978">
    <property type="entry name" value="tRNA-bd_arm"/>
</dbReference>
<dbReference type="NCBIfam" id="TIGR00468">
    <property type="entry name" value="pheS"/>
    <property type="match status" value="1"/>
</dbReference>
<dbReference type="PANTHER" id="PTHR11538:SF41">
    <property type="entry name" value="PHENYLALANINE--TRNA LIGASE, MITOCHONDRIAL"/>
    <property type="match status" value="1"/>
</dbReference>
<dbReference type="PANTHER" id="PTHR11538">
    <property type="entry name" value="PHENYLALANYL-TRNA SYNTHETASE"/>
    <property type="match status" value="1"/>
</dbReference>
<dbReference type="Pfam" id="PF02912">
    <property type="entry name" value="Phe_tRNA-synt_N"/>
    <property type="match status" value="1"/>
</dbReference>
<dbReference type="Pfam" id="PF01409">
    <property type="entry name" value="tRNA-synt_2d"/>
    <property type="match status" value="1"/>
</dbReference>
<dbReference type="SUPFAM" id="SSF55681">
    <property type="entry name" value="Class II aaRS and biotin synthetases"/>
    <property type="match status" value="1"/>
</dbReference>
<dbReference type="SUPFAM" id="SSF46589">
    <property type="entry name" value="tRNA-binding arm"/>
    <property type="match status" value="1"/>
</dbReference>
<dbReference type="PROSITE" id="PS50862">
    <property type="entry name" value="AA_TRNA_LIGASE_II"/>
    <property type="match status" value="1"/>
</dbReference>
<name>SYFA_RHOBA</name>
<organism>
    <name type="scientific">Rhodopirellula baltica (strain DSM 10527 / NCIMB 13988 / SH1)</name>
    <dbReference type="NCBI Taxonomy" id="243090"/>
    <lineage>
        <taxon>Bacteria</taxon>
        <taxon>Pseudomonadati</taxon>
        <taxon>Planctomycetota</taxon>
        <taxon>Planctomycetia</taxon>
        <taxon>Pirellulales</taxon>
        <taxon>Pirellulaceae</taxon>
        <taxon>Rhodopirellula</taxon>
    </lineage>
</organism>
<gene>
    <name evidence="1" type="primary">pheS</name>
    <name type="ordered locus">RB7114</name>
</gene>
<comment type="catalytic activity">
    <reaction evidence="1">
        <text>tRNA(Phe) + L-phenylalanine + ATP = L-phenylalanyl-tRNA(Phe) + AMP + diphosphate + H(+)</text>
        <dbReference type="Rhea" id="RHEA:19413"/>
        <dbReference type="Rhea" id="RHEA-COMP:9668"/>
        <dbReference type="Rhea" id="RHEA-COMP:9699"/>
        <dbReference type="ChEBI" id="CHEBI:15378"/>
        <dbReference type="ChEBI" id="CHEBI:30616"/>
        <dbReference type="ChEBI" id="CHEBI:33019"/>
        <dbReference type="ChEBI" id="CHEBI:58095"/>
        <dbReference type="ChEBI" id="CHEBI:78442"/>
        <dbReference type="ChEBI" id="CHEBI:78531"/>
        <dbReference type="ChEBI" id="CHEBI:456215"/>
        <dbReference type="EC" id="6.1.1.20"/>
    </reaction>
</comment>
<comment type="cofactor">
    <cofactor evidence="1">
        <name>Mg(2+)</name>
        <dbReference type="ChEBI" id="CHEBI:18420"/>
    </cofactor>
    <text evidence="1">Binds 2 magnesium ions per tetramer.</text>
</comment>
<comment type="subunit">
    <text evidence="1">Tetramer of two alpha and two beta subunits.</text>
</comment>
<comment type="subcellular location">
    <subcellularLocation>
        <location evidence="1">Cytoplasm</location>
    </subcellularLocation>
</comment>
<comment type="similarity">
    <text evidence="1">Belongs to the class-II aminoacyl-tRNA synthetase family. Phe-tRNA synthetase alpha subunit type 1 subfamily.</text>
</comment>
<feature type="chain" id="PRO_0000126750" description="Phenylalanine--tRNA ligase alpha subunit">
    <location>
        <begin position="1"/>
        <end position="347"/>
    </location>
</feature>
<feature type="region of interest" description="Disordered" evidence="2">
    <location>
        <begin position="83"/>
        <end position="111"/>
    </location>
</feature>
<feature type="binding site" evidence="1">
    <location>
        <position position="274"/>
    </location>
    <ligand>
        <name>Mg(2+)</name>
        <dbReference type="ChEBI" id="CHEBI:18420"/>
        <note>shared with beta subunit</note>
    </ligand>
</feature>
<keyword id="KW-0030">Aminoacyl-tRNA synthetase</keyword>
<keyword id="KW-0067">ATP-binding</keyword>
<keyword id="KW-0963">Cytoplasm</keyword>
<keyword id="KW-0436">Ligase</keyword>
<keyword id="KW-0460">Magnesium</keyword>
<keyword id="KW-0479">Metal-binding</keyword>
<keyword id="KW-0547">Nucleotide-binding</keyword>
<keyword id="KW-0648">Protein biosynthesis</keyword>
<keyword id="KW-1185">Reference proteome</keyword>
<proteinExistence type="inferred from homology"/>